<organism>
    <name type="scientific">Dichelobacter nodosus (strain VCS1703A)</name>
    <dbReference type="NCBI Taxonomy" id="246195"/>
    <lineage>
        <taxon>Bacteria</taxon>
        <taxon>Pseudomonadati</taxon>
        <taxon>Pseudomonadota</taxon>
        <taxon>Gammaproteobacteria</taxon>
        <taxon>Cardiobacteriales</taxon>
        <taxon>Cardiobacteriaceae</taxon>
        <taxon>Dichelobacter</taxon>
    </lineage>
</organism>
<accession>A5EV06</accession>
<keyword id="KW-0030">Aminoacyl-tRNA synthetase</keyword>
<keyword id="KW-0067">ATP-binding</keyword>
<keyword id="KW-0963">Cytoplasm</keyword>
<keyword id="KW-0436">Ligase</keyword>
<keyword id="KW-0547">Nucleotide-binding</keyword>
<keyword id="KW-0648">Protein biosynthesis</keyword>
<keyword id="KW-1185">Reference proteome</keyword>
<proteinExistence type="inferred from homology"/>
<feature type="chain" id="PRO_0000330968" description="Glutamate--tRNA ligase">
    <location>
        <begin position="1"/>
        <end position="465"/>
    </location>
</feature>
<feature type="short sequence motif" description="'HIGH' region" evidence="1">
    <location>
        <begin position="8"/>
        <end position="18"/>
    </location>
</feature>
<feature type="short sequence motif" description="'KMSKS' region" evidence="1">
    <location>
        <begin position="235"/>
        <end position="239"/>
    </location>
</feature>
<feature type="binding site" evidence="1">
    <location>
        <position position="238"/>
    </location>
    <ligand>
        <name>ATP</name>
        <dbReference type="ChEBI" id="CHEBI:30616"/>
    </ligand>
</feature>
<comment type="function">
    <text evidence="1">Catalyzes the attachment of glutamate to tRNA(Glu) in a two-step reaction: glutamate is first activated by ATP to form Glu-AMP and then transferred to the acceptor end of tRNA(Glu).</text>
</comment>
<comment type="catalytic activity">
    <reaction evidence="1">
        <text>tRNA(Glu) + L-glutamate + ATP = L-glutamyl-tRNA(Glu) + AMP + diphosphate</text>
        <dbReference type="Rhea" id="RHEA:23540"/>
        <dbReference type="Rhea" id="RHEA-COMP:9663"/>
        <dbReference type="Rhea" id="RHEA-COMP:9680"/>
        <dbReference type="ChEBI" id="CHEBI:29985"/>
        <dbReference type="ChEBI" id="CHEBI:30616"/>
        <dbReference type="ChEBI" id="CHEBI:33019"/>
        <dbReference type="ChEBI" id="CHEBI:78442"/>
        <dbReference type="ChEBI" id="CHEBI:78520"/>
        <dbReference type="ChEBI" id="CHEBI:456215"/>
        <dbReference type="EC" id="6.1.1.17"/>
    </reaction>
</comment>
<comment type="subunit">
    <text evidence="1">Monomer.</text>
</comment>
<comment type="subcellular location">
    <subcellularLocation>
        <location evidence="1">Cytoplasm</location>
    </subcellularLocation>
</comment>
<comment type="similarity">
    <text evidence="1">Belongs to the class-I aminoacyl-tRNA synthetase family. Glutamate--tRNA ligase type 1 subfamily.</text>
</comment>
<evidence type="ECO:0000255" key="1">
    <source>
        <dbReference type="HAMAP-Rule" id="MF_00022"/>
    </source>
</evidence>
<reference key="1">
    <citation type="journal article" date="2007" name="Nat. Biotechnol.">
        <title>Genome sequence and identification of candidate vaccine antigens from the animal pathogen Dichelobacter nodosus.</title>
        <authorList>
            <person name="Myers G.S.A."/>
            <person name="Parker D."/>
            <person name="Al-Hasani K."/>
            <person name="Kennan R.M."/>
            <person name="Seemann T."/>
            <person name="Ren Q."/>
            <person name="Badger J.H."/>
            <person name="Selengut J.D."/>
            <person name="Deboy R.T."/>
            <person name="Tettelin H."/>
            <person name="Boyce J.D."/>
            <person name="McCarl V.P."/>
            <person name="Han X."/>
            <person name="Nelson W.C."/>
            <person name="Madupu R."/>
            <person name="Mohamoud Y."/>
            <person name="Holley T."/>
            <person name="Fedorova N."/>
            <person name="Khouri H."/>
            <person name="Bottomley S.P."/>
            <person name="Whittington R.J."/>
            <person name="Adler B."/>
            <person name="Songer J.G."/>
            <person name="Rood J.I."/>
            <person name="Paulsen I.T."/>
        </authorList>
    </citation>
    <scope>NUCLEOTIDE SEQUENCE [LARGE SCALE GENOMIC DNA]</scope>
    <source>
        <strain>VCS1703A</strain>
    </source>
</reference>
<sequence>MLITRFAPSPTGDLHIGGVRTALFSWLVAKQKGGEFRLRIEDTDLERSTEASTQVILKGMEWLGLDYQGEVIYQSRRTDIYNAVIDDMIAQGLAYYCWCTPEELEEMRAAQKARGEKPRYNGKYRNGGEPVDGVTPVVRFKNPLEGTVSWHDHVRGVVTIDNSELDDFIIRRSDGMPTYNFCVVIDDHAQDIGLVIRGDDHVSNTPRQINLYRALGYQVPEFAHVPMILGDDGKRLSKRHGATNVLDYQKEGYLPEAIINYLVRLGWAYGDQEIFSIEELLTHFSIDDVHSAPSTFNTEKLRWLNQQYLMHTDIKELARLLPDFCAAQGYQLTQEQLLTVVPHYQERAKTLREMAEMMRWVACAPETFPEAAAKKAFKNDTAQIMQLLITKLQALQDFDEKTVHDALAAVVSELNIGFGKMGQPARLAITGGLPSPDLALCFALIGKENALQRLQYAIKFMTQNQ</sequence>
<gene>
    <name evidence="1" type="primary">gltX</name>
    <name type="ordered locus">DNO_0734</name>
</gene>
<dbReference type="EC" id="6.1.1.17" evidence="1"/>
<dbReference type="EMBL" id="CP000513">
    <property type="protein sequence ID" value="ABQ13746.1"/>
    <property type="molecule type" value="Genomic_DNA"/>
</dbReference>
<dbReference type="RefSeq" id="WP_012031063.1">
    <property type="nucleotide sequence ID" value="NC_009446.1"/>
</dbReference>
<dbReference type="SMR" id="A5EV06"/>
<dbReference type="STRING" id="246195.DNO_0734"/>
<dbReference type="KEGG" id="dno:DNO_0734"/>
<dbReference type="eggNOG" id="COG0008">
    <property type="taxonomic scope" value="Bacteria"/>
</dbReference>
<dbReference type="HOGENOM" id="CLU_015768_6_0_6"/>
<dbReference type="OrthoDB" id="9807503at2"/>
<dbReference type="Proteomes" id="UP000000248">
    <property type="component" value="Chromosome"/>
</dbReference>
<dbReference type="GO" id="GO:0005829">
    <property type="term" value="C:cytosol"/>
    <property type="evidence" value="ECO:0007669"/>
    <property type="project" value="TreeGrafter"/>
</dbReference>
<dbReference type="GO" id="GO:0005524">
    <property type="term" value="F:ATP binding"/>
    <property type="evidence" value="ECO:0007669"/>
    <property type="project" value="UniProtKB-UniRule"/>
</dbReference>
<dbReference type="GO" id="GO:0004818">
    <property type="term" value="F:glutamate-tRNA ligase activity"/>
    <property type="evidence" value="ECO:0007669"/>
    <property type="project" value="UniProtKB-UniRule"/>
</dbReference>
<dbReference type="GO" id="GO:0000049">
    <property type="term" value="F:tRNA binding"/>
    <property type="evidence" value="ECO:0007669"/>
    <property type="project" value="InterPro"/>
</dbReference>
<dbReference type="GO" id="GO:0008270">
    <property type="term" value="F:zinc ion binding"/>
    <property type="evidence" value="ECO:0007669"/>
    <property type="project" value="InterPro"/>
</dbReference>
<dbReference type="GO" id="GO:0006424">
    <property type="term" value="P:glutamyl-tRNA aminoacylation"/>
    <property type="evidence" value="ECO:0007669"/>
    <property type="project" value="UniProtKB-UniRule"/>
</dbReference>
<dbReference type="CDD" id="cd00808">
    <property type="entry name" value="GluRS_core"/>
    <property type="match status" value="1"/>
</dbReference>
<dbReference type="FunFam" id="3.40.50.620:FF:000007">
    <property type="entry name" value="Glutamate--tRNA ligase"/>
    <property type="match status" value="1"/>
</dbReference>
<dbReference type="Gene3D" id="1.10.10.350">
    <property type="match status" value="1"/>
</dbReference>
<dbReference type="Gene3D" id="3.40.50.620">
    <property type="entry name" value="HUPs"/>
    <property type="match status" value="1"/>
</dbReference>
<dbReference type="HAMAP" id="MF_00022">
    <property type="entry name" value="Glu_tRNA_synth_type1"/>
    <property type="match status" value="1"/>
</dbReference>
<dbReference type="InterPro" id="IPR045462">
    <property type="entry name" value="aa-tRNA-synth_I_cd-bd"/>
</dbReference>
<dbReference type="InterPro" id="IPR020751">
    <property type="entry name" value="aa-tRNA-synth_I_codon-bd_sub2"/>
</dbReference>
<dbReference type="InterPro" id="IPR001412">
    <property type="entry name" value="aa-tRNA-synth_I_CS"/>
</dbReference>
<dbReference type="InterPro" id="IPR008925">
    <property type="entry name" value="aa_tRNA-synth_I_cd-bd_sf"/>
</dbReference>
<dbReference type="InterPro" id="IPR004527">
    <property type="entry name" value="Glu-tRNA-ligase_bac/mito"/>
</dbReference>
<dbReference type="InterPro" id="IPR000924">
    <property type="entry name" value="Glu/Gln-tRNA-synth"/>
</dbReference>
<dbReference type="InterPro" id="IPR020058">
    <property type="entry name" value="Glu/Gln-tRNA-synth_Ib_cat-dom"/>
</dbReference>
<dbReference type="InterPro" id="IPR049940">
    <property type="entry name" value="GluQ/Sye"/>
</dbReference>
<dbReference type="InterPro" id="IPR033910">
    <property type="entry name" value="GluRS_core"/>
</dbReference>
<dbReference type="InterPro" id="IPR014729">
    <property type="entry name" value="Rossmann-like_a/b/a_fold"/>
</dbReference>
<dbReference type="NCBIfam" id="TIGR00464">
    <property type="entry name" value="gltX_bact"/>
    <property type="match status" value="1"/>
</dbReference>
<dbReference type="PANTHER" id="PTHR43311">
    <property type="entry name" value="GLUTAMATE--TRNA LIGASE"/>
    <property type="match status" value="1"/>
</dbReference>
<dbReference type="PANTHER" id="PTHR43311:SF2">
    <property type="entry name" value="GLUTAMATE--TRNA LIGASE, MITOCHONDRIAL-RELATED"/>
    <property type="match status" value="1"/>
</dbReference>
<dbReference type="Pfam" id="PF19269">
    <property type="entry name" value="Anticodon_2"/>
    <property type="match status" value="1"/>
</dbReference>
<dbReference type="Pfam" id="PF00749">
    <property type="entry name" value="tRNA-synt_1c"/>
    <property type="match status" value="1"/>
</dbReference>
<dbReference type="PRINTS" id="PR00987">
    <property type="entry name" value="TRNASYNTHGLU"/>
</dbReference>
<dbReference type="SUPFAM" id="SSF48163">
    <property type="entry name" value="An anticodon-binding domain of class I aminoacyl-tRNA synthetases"/>
    <property type="match status" value="1"/>
</dbReference>
<dbReference type="SUPFAM" id="SSF52374">
    <property type="entry name" value="Nucleotidylyl transferase"/>
    <property type="match status" value="1"/>
</dbReference>
<dbReference type="PROSITE" id="PS00178">
    <property type="entry name" value="AA_TRNA_LIGASE_I"/>
    <property type="match status" value="1"/>
</dbReference>
<name>SYE_DICNV</name>
<protein>
    <recommendedName>
        <fullName evidence="1">Glutamate--tRNA ligase</fullName>
        <ecNumber evidence="1">6.1.1.17</ecNumber>
    </recommendedName>
    <alternativeName>
        <fullName evidence="1">Glutamyl-tRNA synthetase</fullName>
        <shortName evidence="1">GluRS</shortName>
    </alternativeName>
</protein>